<evidence type="ECO:0000250" key="1">
    <source>
        <dbReference type="UniProtKB" id="Q1K4Q1"/>
    </source>
</evidence>
<evidence type="ECO:0000250" key="2">
    <source>
        <dbReference type="UniProtKB" id="Q1K8B6"/>
    </source>
</evidence>
<evidence type="ECO:0000250" key="3">
    <source>
        <dbReference type="UniProtKB" id="Q4WP32"/>
    </source>
</evidence>
<evidence type="ECO:0000250" key="4">
    <source>
        <dbReference type="UniProtKB" id="Q7Z9M7"/>
    </source>
</evidence>
<evidence type="ECO:0000255" key="5"/>
<evidence type="ECO:0000255" key="6">
    <source>
        <dbReference type="PROSITE-ProRule" id="PRU00498"/>
    </source>
</evidence>
<evidence type="ECO:0000269" key="7">
    <source>
    </source>
</evidence>
<evidence type="ECO:0000303" key="8">
    <source>
    </source>
</evidence>
<evidence type="ECO:0000305" key="9"/>
<evidence type="ECO:0000305" key="10">
    <source>
    </source>
</evidence>
<comment type="function">
    <text evidence="7">Lytic polysaccharide monooxygenase (LPMO) that depolymerizes crystalline and amorphous polysaccharides via the oxidation of scissile alpha- or beta-(1-4)-glycosidic bonds, yielding C1 and C4 oxidation products (PubMed:35080911). Catalysis by LPMOs requires the reduction of the active-site copper from Cu(II) to Cu(I) by a reducing agent and H(2)O(2) or O(2) as a cosubstrate (PubMed:35080911). Shows endoglucanase activity on tamarind xyloglucan, as well as on beechwood xylan when combined with phosphoric acid swollen cellulose (PASC) (PubMed:35080911). Shows no activity on wheat arabinoxylan, konjac glucomannan, acetylated spruce galactoglucomannan, or cellopentaose (PubMed:35080911).</text>
</comment>
<comment type="catalytic activity">
    <reaction evidence="7">
        <text>[(1-&gt;4)-beta-D-glucosyl]n+m + reduced acceptor + O2 = 4-dehydro-beta-D-glucosyl-[(1-&gt;4)-beta-D-glucosyl]n-1 + [(1-&gt;4)-beta-D-glucosyl]m + acceptor + H2O.</text>
        <dbReference type="EC" id="1.14.99.56"/>
    </reaction>
</comment>
<comment type="cofactor">
    <cofactor evidence="10">
        <name>Cu(2+)</name>
        <dbReference type="ChEBI" id="CHEBI:29036"/>
    </cofactor>
    <text evidence="10">Binds 1 copper ion per subunit.</text>
</comment>
<comment type="subcellular location">
    <subcellularLocation>
        <location evidence="10">Secreted</location>
    </subcellularLocation>
</comment>
<comment type="biotechnology">
    <text evidence="10">Lignocellulose is the most abundant polymeric composite on Earth and is a recalcitrant but promising renewable substrate for industrial biotechnology applications. Together with cellobiose dehydrogenases (CDHs) an enzymatic system capable of oxidative cellulose cleavage is formed, which increases the efficiency of cellulases and put LPMOs at focus of biofuel research.</text>
</comment>
<comment type="similarity">
    <text evidence="9">Belongs to the polysaccharide monooxygenase AA9 family.</text>
</comment>
<reference key="1">
    <citation type="journal article" date="2011" name="Nat. Biotechnol.">
        <title>Comparative genomic analysis of the thermophilic biomass-degrading fungi Myceliophthora thermophila and Thielavia terrestris.</title>
        <authorList>
            <person name="Berka R.M."/>
            <person name="Grigoriev I.V."/>
            <person name="Otillar R."/>
            <person name="Salamov A."/>
            <person name="Grimwood J."/>
            <person name="Reid I."/>
            <person name="Ishmael N."/>
            <person name="John T."/>
            <person name="Darmond C."/>
            <person name="Moisan M.-C."/>
            <person name="Henrissat B."/>
            <person name="Coutinho P.M."/>
            <person name="Lombard V."/>
            <person name="Natvig D.O."/>
            <person name="Lindquist E."/>
            <person name="Schmutz J."/>
            <person name="Lucas S."/>
            <person name="Harris P."/>
            <person name="Powlowski J."/>
            <person name="Bellemare A."/>
            <person name="Taylor D."/>
            <person name="Butler G."/>
            <person name="de Vries R.P."/>
            <person name="Allijn I.E."/>
            <person name="van den Brink J."/>
            <person name="Ushinsky S."/>
            <person name="Storms R."/>
            <person name="Powell A.J."/>
            <person name="Paulsen I.T."/>
            <person name="Elbourne L.D.H."/>
            <person name="Baker S.E."/>
            <person name="Magnuson J."/>
            <person name="LaBoissiere S."/>
            <person name="Clutterbuck A.J."/>
            <person name="Martinez D."/>
            <person name="Wogulis M."/>
            <person name="de Leon A.L."/>
            <person name="Rey M.W."/>
            <person name="Tsang A."/>
        </authorList>
    </citation>
    <scope>NUCLEOTIDE SEQUENCE [LARGE SCALE GENOMIC DNA]</scope>
    <source>
        <strain>ATCC 38088 / NRRL 8126</strain>
    </source>
</reference>
<reference key="2">
    <citation type="journal article" date="2010" name="Biochemistry">
        <title>Stimulation of lignocellulosic biomass hydrolysis by proteins of glycoside hydrolase family 61: structure and function of a large, enigmatic family.</title>
        <authorList>
            <person name="Harris P.V."/>
            <person name="Welner D."/>
            <person name="McFarland K.C."/>
            <person name="Re E."/>
            <person name="Navarro Poulsen J.C."/>
            <person name="Brown K."/>
            <person name="Salbo R."/>
            <person name="Ding H."/>
            <person name="Vlasenko E."/>
            <person name="Merino S."/>
            <person name="Xu F."/>
            <person name="Cherry J."/>
            <person name="Larsen S."/>
            <person name="Lo Leggio L."/>
        </authorList>
    </citation>
    <scope>FUNCTION</scope>
    <scope>CATALYTIC ACTIVITY</scope>
</reference>
<reference key="3">
    <citation type="journal article" date="2022" name="Appl. Environ. Microbiol.">
        <title>Comparison of six lytic polysaccharide monooxygenases from Thermothielavioides terrestris shows that functional variation underlies the multiplicity of LPMO genes in filamentous fungi.</title>
        <authorList>
            <person name="Tolgo M."/>
            <person name="Hegnar O.A."/>
            <person name="Oestby H."/>
            <person name="Varnai A."/>
            <person name="Vilaplana F."/>
            <person name="Eijsink V.G.H."/>
            <person name="Olsson L."/>
        </authorList>
    </citation>
    <scope>FUNCTION</scope>
    <scope>CATALYTIC ACTIVITY</scope>
</reference>
<proteinExistence type="evidence at protein level"/>
<organism>
    <name type="scientific">Thermothielavioides terrestris (strain ATCC 38088 / NRRL 8126)</name>
    <name type="common">Thielavia terrestris</name>
    <dbReference type="NCBI Taxonomy" id="578455"/>
    <lineage>
        <taxon>Eukaryota</taxon>
        <taxon>Fungi</taxon>
        <taxon>Dikarya</taxon>
        <taxon>Ascomycota</taxon>
        <taxon>Pezizomycotina</taxon>
        <taxon>Sordariomycetes</taxon>
        <taxon>Sordariomycetidae</taxon>
        <taxon>Sordariales</taxon>
        <taxon>Chaetomiaceae</taxon>
        <taxon>Thermothielavioides</taxon>
        <taxon>Thermothielavioides terrestris</taxon>
    </lineage>
</organism>
<accession>G2RGE5</accession>
<protein>
    <recommendedName>
        <fullName evidence="8">AA9 family lytic polysaccharide monooxygenase E</fullName>
        <shortName evidence="8">LPMO9E</shortName>
        <ecNumber evidence="7">1.14.99.56</ecNumber>
    </recommendedName>
    <alternativeName>
        <fullName evidence="9">Endo-1,4-beta-glucanase LPMO9E</fullName>
        <shortName evidence="9">Endoglucanase LPMO9E</shortName>
    </alternativeName>
    <alternativeName>
        <fullName evidence="9">Glycosyl hydrolase 61 family protein LPMO9E</fullName>
    </alternativeName>
</protein>
<gene>
    <name evidence="8" type="primary">LPMO9E</name>
    <name type="ORF">THITE_2122979</name>
</gene>
<sequence>MLANGAIVFLAAALGVSGHYTWPRVNDGADWQQVRKADNWQDNGYVGDVTSPQIRCFQATPSPAPSVLNTTAGSTVTYWANPDVYHPGPVQFYMARVPDGEDINSWNGDGAVWFKVYEDHPTFGAQLTWPSTGKSSFAVPIPPCIKSGYYLLRAEQIGLHVAQSVGGAQFYISCAQLSVTGGGSTEPPNKVAFPGAYSATDPGILINIYYPVPTSYQNPGPAVFSC</sequence>
<keyword id="KW-0119">Carbohydrate metabolism</keyword>
<keyword id="KW-0136">Cellulose degradation</keyword>
<keyword id="KW-0186">Copper</keyword>
<keyword id="KW-1015">Disulfide bond</keyword>
<keyword id="KW-0325">Glycoprotein</keyword>
<keyword id="KW-0479">Metal-binding</keyword>
<keyword id="KW-0503">Monooxygenase</keyword>
<keyword id="KW-0560">Oxidoreductase</keyword>
<keyword id="KW-0624">Polysaccharide degradation</keyword>
<keyword id="KW-1185">Reference proteome</keyword>
<keyword id="KW-0964">Secreted</keyword>
<keyword id="KW-0732">Signal</keyword>
<feature type="signal peptide" evidence="5">
    <location>
        <begin position="1"/>
        <end position="18"/>
    </location>
</feature>
<feature type="chain" id="PRO_5003436540" description="AA9 family lytic polysaccharide monooxygenase E">
    <location>
        <begin position="19"/>
        <end position="226"/>
    </location>
</feature>
<feature type="binding site" evidence="3">
    <location>
        <position position="19"/>
    </location>
    <ligand>
        <name>Cu(2+)</name>
        <dbReference type="ChEBI" id="CHEBI:29036"/>
    </ligand>
</feature>
<feature type="binding site" evidence="3">
    <location>
        <position position="86"/>
    </location>
    <ligand>
        <name>Cu(2+)</name>
        <dbReference type="ChEBI" id="CHEBI:29036"/>
    </ligand>
</feature>
<feature type="binding site" evidence="2">
    <location>
        <position position="160"/>
    </location>
    <ligand>
        <name>O2</name>
        <dbReference type="ChEBI" id="CHEBI:15379"/>
    </ligand>
</feature>
<feature type="binding site" evidence="2">
    <location>
        <position position="169"/>
    </location>
    <ligand>
        <name>O2</name>
        <dbReference type="ChEBI" id="CHEBI:15379"/>
    </ligand>
</feature>
<feature type="binding site" evidence="3">
    <location>
        <position position="171"/>
    </location>
    <ligand>
        <name>Cu(2+)</name>
        <dbReference type="ChEBI" id="CHEBI:29036"/>
    </ligand>
</feature>
<feature type="glycosylation site" description="N-linked (GlcNAc...) asparagine" evidence="6">
    <location>
        <position position="69"/>
    </location>
</feature>
<feature type="disulfide bond" evidence="4">
    <location>
        <begin position="56"/>
        <end position="174"/>
    </location>
</feature>
<feature type="disulfide bond" evidence="1">
    <location>
        <begin position="144"/>
        <end position="226"/>
    </location>
</feature>
<name>LP9E_THETT</name>
<dbReference type="EC" id="1.14.99.56" evidence="7"/>
<dbReference type="EMBL" id="CP003014">
    <property type="protein sequence ID" value="AEO71030.1"/>
    <property type="molecule type" value="Genomic_DNA"/>
</dbReference>
<dbReference type="RefSeq" id="XP_003657366.1">
    <property type="nucleotide sequence ID" value="XM_003657318.1"/>
</dbReference>
<dbReference type="SMR" id="G2RGE5"/>
<dbReference type="STRING" id="578455.G2RGE5"/>
<dbReference type="GeneID" id="11523157"/>
<dbReference type="KEGG" id="ttt:THITE_2122979"/>
<dbReference type="eggNOG" id="ENOG502SMRF">
    <property type="taxonomic scope" value="Eukaryota"/>
</dbReference>
<dbReference type="HOGENOM" id="CLU_031730_4_2_1"/>
<dbReference type="OrthoDB" id="5271017at2759"/>
<dbReference type="Proteomes" id="UP000008181">
    <property type="component" value="Chromosome 6"/>
</dbReference>
<dbReference type="GO" id="GO:0005576">
    <property type="term" value="C:extracellular region"/>
    <property type="evidence" value="ECO:0007669"/>
    <property type="project" value="UniProtKB-SubCell"/>
</dbReference>
<dbReference type="GO" id="GO:0046872">
    <property type="term" value="F:metal ion binding"/>
    <property type="evidence" value="ECO:0007669"/>
    <property type="project" value="UniProtKB-KW"/>
</dbReference>
<dbReference type="GO" id="GO:0004497">
    <property type="term" value="F:monooxygenase activity"/>
    <property type="evidence" value="ECO:0007669"/>
    <property type="project" value="UniProtKB-KW"/>
</dbReference>
<dbReference type="GO" id="GO:0030245">
    <property type="term" value="P:cellulose catabolic process"/>
    <property type="evidence" value="ECO:0007669"/>
    <property type="project" value="UniProtKB-KW"/>
</dbReference>
<dbReference type="CDD" id="cd21175">
    <property type="entry name" value="LPMO_AA9"/>
    <property type="match status" value="1"/>
</dbReference>
<dbReference type="Gene3D" id="2.70.50.70">
    <property type="match status" value="1"/>
</dbReference>
<dbReference type="InterPro" id="IPR049892">
    <property type="entry name" value="AA9"/>
</dbReference>
<dbReference type="InterPro" id="IPR005103">
    <property type="entry name" value="AA9_LPMO"/>
</dbReference>
<dbReference type="PANTHER" id="PTHR33353:SF3">
    <property type="entry name" value="ENDOGLUCANASE II"/>
    <property type="match status" value="1"/>
</dbReference>
<dbReference type="PANTHER" id="PTHR33353">
    <property type="entry name" value="PUTATIVE (AFU_ORTHOLOGUE AFUA_1G12560)-RELATED"/>
    <property type="match status" value="1"/>
</dbReference>
<dbReference type="Pfam" id="PF03443">
    <property type="entry name" value="AA9"/>
    <property type="match status" value="1"/>
</dbReference>